<reference key="1">
    <citation type="submission" date="2008-04" db="EMBL/GenBank/DDBJ databases">
        <title>Complete sequence of Yersinia pseudotuberculosis PB1/+.</title>
        <authorList>
            <person name="Copeland A."/>
            <person name="Lucas S."/>
            <person name="Lapidus A."/>
            <person name="Glavina del Rio T."/>
            <person name="Dalin E."/>
            <person name="Tice H."/>
            <person name="Bruce D."/>
            <person name="Goodwin L."/>
            <person name="Pitluck S."/>
            <person name="Munk A.C."/>
            <person name="Brettin T."/>
            <person name="Detter J.C."/>
            <person name="Han C."/>
            <person name="Tapia R."/>
            <person name="Schmutz J."/>
            <person name="Larimer F."/>
            <person name="Land M."/>
            <person name="Hauser L."/>
            <person name="Challacombe J.F."/>
            <person name="Green L."/>
            <person name="Lindler L.E."/>
            <person name="Nikolich M.P."/>
            <person name="Richardson P."/>
        </authorList>
    </citation>
    <scope>NUCLEOTIDE SEQUENCE [LARGE SCALE GENOMIC DNA]</scope>
    <source>
        <strain>PB1/+</strain>
    </source>
</reference>
<feature type="chain" id="PRO_1000093931" description="Holo-[acyl-carrier-protein] synthase">
    <location>
        <begin position="1"/>
        <end position="126"/>
    </location>
</feature>
<feature type="binding site" evidence="1">
    <location>
        <position position="9"/>
    </location>
    <ligand>
        <name>Mg(2+)</name>
        <dbReference type="ChEBI" id="CHEBI:18420"/>
    </ligand>
</feature>
<feature type="binding site" evidence="1">
    <location>
        <position position="58"/>
    </location>
    <ligand>
        <name>Mg(2+)</name>
        <dbReference type="ChEBI" id="CHEBI:18420"/>
    </ligand>
</feature>
<comment type="function">
    <text evidence="1">Transfers the 4'-phosphopantetheine moiety from coenzyme A to a Ser of acyl-carrier-protein.</text>
</comment>
<comment type="catalytic activity">
    <reaction evidence="1">
        <text>apo-[ACP] + CoA = holo-[ACP] + adenosine 3',5'-bisphosphate + H(+)</text>
        <dbReference type="Rhea" id="RHEA:12068"/>
        <dbReference type="Rhea" id="RHEA-COMP:9685"/>
        <dbReference type="Rhea" id="RHEA-COMP:9690"/>
        <dbReference type="ChEBI" id="CHEBI:15378"/>
        <dbReference type="ChEBI" id="CHEBI:29999"/>
        <dbReference type="ChEBI" id="CHEBI:57287"/>
        <dbReference type="ChEBI" id="CHEBI:58343"/>
        <dbReference type="ChEBI" id="CHEBI:64479"/>
        <dbReference type="EC" id="2.7.8.7"/>
    </reaction>
</comment>
<comment type="cofactor">
    <cofactor evidence="1">
        <name>Mg(2+)</name>
        <dbReference type="ChEBI" id="CHEBI:18420"/>
    </cofactor>
</comment>
<comment type="subcellular location">
    <subcellularLocation>
        <location evidence="1">Cytoplasm</location>
    </subcellularLocation>
</comment>
<comment type="similarity">
    <text evidence="1">Belongs to the P-Pant transferase superfamily. AcpS family.</text>
</comment>
<protein>
    <recommendedName>
        <fullName evidence="1">Holo-[acyl-carrier-protein] synthase</fullName>
        <shortName evidence="1">Holo-ACP synthase</shortName>
        <ecNumber evidence="1">2.7.8.7</ecNumber>
    </recommendedName>
    <alternativeName>
        <fullName evidence="1">4'-phosphopantetheinyl transferase AcpS</fullName>
    </alternativeName>
</protein>
<organism>
    <name type="scientific">Yersinia pseudotuberculosis serotype IB (strain PB1/+)</name>
    <dbReference type="NCBI Taxonomy" id="502801"/>
    <lineage>
        <taxon>Bacteria</taxon>
        <taxon>Pseudomonadati</taxon>
        <taxon>Pseudomonadota</taxon>
        <taxon>Gammaproteobacteria</taxon>
        <taxon>Enterobacterales</taxon>
        <taxon>Yersiniaceae</taxon>
        <taxon>Yersinia</taxon>
    </lineage>
</organism>
<sequence length="126" mass="13993">MAILGLGTDIVEISRIEAVVERTGERLARRILSPSEWQHYQQHQQPVRFLAKRFAVKEAAAKAFGTGIRNGLAFNQFEVVNDALGKPTLRLHSRAAELAVELGVKSLHVTLADERRYACATVIIES</sequence>
<gene>
    <name evidence="1" type="primary">acpS</name>
    <name type="ordered locus">YPTS_2997</name>
</gene>
<dbReference type="EC" id="2.7.8.7" evidence="1"/>
<dbReference type="EMBL" id="CP001048">
    <property type="protein sequence ID" value="ACC89954.1"/>
    <property type="molecule type" value="Genomic_DNA"/>
</dbReference>
<dbReference type="RefSeq" id="WP_011192825.1">
    <property type="nucleotide sequence ID" value="NZ_CP009780.1"/>
</dbReference>
<dbReference type="SMR" id="B2KA43"/>
<dbReference type="GeneID" id="49785104"/>
<dbReference type="KEGG" id="ypb:YPTS_2997"/>
<dbReference type="PATRIC" id="fig|502801.10.peg.2428"/>
<dbReference type="GO" id="GO:0005737">
    <property type="term" value="C:cytoplasm"/>
    <property type="evidence" value="ECO:0007669"/>
    <property type="project" value="UniProtKB-SubCell"/>
</dbReference>
<dbReference type="GO" id="GO:0008897">
    <property type="term" value="F:holo-[acyl-carrier-protein] synthase activity"/>
    <property type="evidence" value="ECO:0007669"/>
    <property type="project" value="UniProtKB-UniRule"/>
</dbReference>
<dbReference type="GO" id="GO:0000287">
    <property type="term" value="F:magnesium ion binding"/>
    <property type="evidence" value="ECO:0007669"/>
    <property type="project" value="UniProtKB-UniRule"/>
</dbReference>
<dbReference type="GO" id="GO:0006633">
    <property type="term" value="P:fatty acid biosynthetic process"/>
    <property type="evidence" value="ECO:0007669"/>
    <property type="project" value="UniProtKB-UniRule"/>
</dbReference>
<dbReference type="FunFam" id="3.90.470.20:FF:000001">
    <property type="entry name" value="Holo-[acyl-carrier-protein] synthase"/>
    <property type="match status" value="1"/>
</dbReference>
<dbReference type="Gene3D" id="3.90.470.20">
    <property type="entry name" value="4'-phosphopantetheinyl transferase domain"/>
    <property type="match status" value="1"/>
</dbReference>
<dbReference type="HAMAP" id="MF_00101">
    <property type="entry name" value="AcpS"/>
    <property type="match status" value="1"/>
</dbReference>
<dbReference type="InterPro" id="IPR008278">
    <property type="entry name" value="4-PPantetheinyl_Trfase_dom"/>
</dbReference>
<dbReference type="InterPro" id="IPR037143">
    <property type="entry name" value="4-PPantetheinyl_Trfase_dom_sf"/>
</dbReference>
<dbReference type="InterPro" id="IPR002582">
    <property type="entry name" value="ACPS"/>
</dbReference>
<dbReference type="InterPro" id="IPR004568">
    <property type="entry name" value="Ppantetheine-prot_Trfase_dom"/>
</dbReference>
<dbReference type="NCBIfam" id="TIGR00516">
    <property type="entry name" value="acpS"/>
    <property type="match status" value="1"/>
</dbReference>
<dbReference type="NCBIfam" id="TIGR00556">
    <property type="entry name" value="pantethn_trn"/>
    <property type="match status" value="1"/>
</dbReference>
<dbReference type="Pfam" id="PF01648">
    <property type="entry name" value="ACPS"/>
    <property type="match status" value="1"/>
</dbReference>
<dbReference type="SUPFAM" id="SSF56214">
    <property type="entry name" value="4'-phosphopantetheinyl transferase"/>
    <property type="match status" value="1"/>
</dbReference>
<name>ACPS_YERPB</name>
<keyword id="KW-0963">Cytoplasm</keyword>
<keyword id="KW-0275">Fatty acid biosynthesis</keyword>
<keyword id="KW-0276">Fatty acid metabolism</keyword>
<keyword id="KW-0444">Lipid biosynthesis</keyword>
<keyword id="KW-0443">Lipid metabolism</keyword>
<keyword id="KW-0460">Magnesium</keyword>
<keyword id="KW-0479">Metal-binding</keyword>
<keyword id="KW-0808">Transferase</keyword>
<accession>B2KA43</accession>
<proteinExistence type="inferred from homology"/>
<evidence type="ECO:0000255" key="1">
    <source>
        <dbReference type="HAMAP-Rule" id="MF_00101"/>
    </source>
</evidence>